<protein>
    <recommendedName>
        <fullName evidence="1">Endonuclease V</fullName>
        <ecNumber evidence="1">3.1.21.7</ecNumber>
    </recommendedName>
    <alternativeName>
        <fullName evidence="1">Deoxyinosine 3'endonuclease</fullName>
    </alternativeName>
    <alternativeName>
        <fullName evidence="1">Deoxyribonuclease V</fullName>
        <shortName evidence="1">DNase V</shortName>
    </alternativeName>
</protein>
<name>NFI_ECO24</name>
<comment type="function">
    <text evidence="1">DNA repair enzyme involved in the repair of deaminated bases. Selectively cleaves double-stranded DNA at the second phosphodiester bond 3' to a deoxyinosine leaving behind the intact lesion on the nicked DNA.</text>
</comment>
<comment type="catalytic activity">
    <reaction evidence="1">
        <text>Endonucleolytic cleavage at apurinic or apyrimidinic sites to products with a 5'-phosphate.</text>
        <dbReference type="EC" id="3.1.21.7"/>
    </reaction>
</comment>
<comment type="cofactor">
    <cofactor evidence="1">
        <name>Mg(2+)</name>
        <dbReference type="ChEBI" id="CHEBI:18420"/>
    </cofactor>
</comment>
<comment type="subcellular location">
    <subcellularLocation>
        <location evidence="1">Cytoplasm</location>
    </subcellularLocation>
</comment>
<comment type="similarity">
    <text evidence="1">Belongs to the endonuclease V family.</text>
</comment>
<proteinExistence type="inferred from homology"/>
<reference key="1">
    <citation type="journal article" date="2008" name="J. Bacteriol.">
        <title>The pangenome structure of Escherichia coli: comparative genomic analysis of E. coli commensal and pathogenic isolates.</title>
        <authorList>
            <person name="Rasko D.A."/>
            <person name="Rosovitz M.J."/>
            <person name="Myers G.S.A."/>
            <person name="Mongodin E.F."/>
            <person name="Fricke W.F."/>
            <person name="Gajer P."/>
            <person name="Crabtree J."/>
            <person name="Sebaihia M."/>
            <person name="Thomson N.R."/>
            <person name="Chaudhuri R."/>
            <person name="Henderson I.R."/>
            <person name="Sperandio V."/>
            <person name="Ravel J."/>
        </authorList>
    </citation>
    <scope>NUCLEOTIDE SEQUENCE [LARGE SCALE GENOMIC DNA]</scope>
    <source>
        <strain>E24377A / ETEC</strain>
    </source>
</reference>
<keyword id="KW-0963">Cytoplasm</keyword>
<keyword id="KW-0227">DNA damage</keyword>
<keyword id="KW-0234">DNA repair</keyword>
<keyword id="KW-0255">Endonuclease</keyword>
<keyword id="KW-0378">Hydrolase</keyword>
<keyword id="KW-0460">Magnesium</keyword>
<keyword id="KW-0479">Metal-binding</keyword>
<keyword id="KW-0540">Nuclease</keyword>
<keyword id="KW-1185">Reference proteome</keyword>
<accession>A7ZUL4</accession>
<dbReference type="EC" id="3.1.21.7" evidence="1"/>
<dbReference type="EMBL" id="CP000800">
    <property type="protein sequence ID" value="ABV17405.1"/>
    <property type="molecule type" value="Genomic_DNA"/>
</dbReference>
<dbReference type="RefSeq" id="WP_000362392.1">
    <property type="nucleotide sequence ID" value="NC_009801.1"/>
</dbReference>
<dbReference type="SMR" id="A7ZUL4"/>
<dbReference type="GeneID" id="93777896"/>
<dbReference type="KEGG" id="ecw:EcE24377A_4541"/>
<dbReference type="HOGENOM" id="CLU_047631_1_0_6"/>
<dbReference type="Proteomes" id="UP000001122">
    <property type="component" value="Chromosome"/>
</dbReference>
<dbReference type="GO" id="GO:0005737">
    <property type="term" value="C:cytoplasm"/>
    <property type="evidence" value="ECO:0007669"/>
    <property type="project" value="UniProtKB-SubCell"/>
</dbReference>
<dbReference type="GO" id="GO:0043737">
    <property type="term" value="F:deoxyribonuclease V activity"/>
    <property type="evidence" value="ECO:0007669"/>
    <property type="project" value="UniProtKB-UniRule"/>
</dbReference>
<dbReference type="GO" id="GO:0000287">
    <property type="term" value="F:magnesium ion binding"/>
    <property type="evidence" value="ECO:0007669"/>
    <property type="project" value="UniProtKB-UniRule"/>
</dbReference>
<dbReference type="GO" id="GO:0016891">
    <property type="term" value="F:RNA endonuclease activity, producing 5'-phosphomonoesters"/>
    <property type="evidence" value="ECO:0007669"/>
    <property type="project" value="TreeGrafter"/>
</dbReference>
<dbReference type="GO" id="GO:0003727">
    <property type="term" value="F:single-stranded RNA binding"/>
    <property type="evidence" value="ECO:0007669"/>
    <property type="project" value="TreeGrafter"/>
</dbReference>
<dbReference type="GO" id="GO:0006281">
    <property type="term" value="P:DNA repair"/>
    <property type="evidence" value="ECO:0007669"/>
    <property type="project" value="UniProtKB-UniRule"/>
</dbReference>
<dbReference type="CDD" id="cd06559">
    <property type="entry name" value="Endonuclease_V"/>
    <property type="match status" value="1"/>
</dbReference>
<dbReference type="FunFam" id="3.30.2170.10:FF:000001">
    <property type="entry name" value="Endonuclease V"/>
    <property type="match status" value="1"/>
</dbReference>
<dbReference type="Gene3D" id="3.30.2170.10">
    <property type="entry name" value="archaeoglobus fulgidus dsm 4304 superfamily"/>
    <property type="match status" value="1"/>
</dbReference>
<dbReference type="HAMAP" id="MF_00801">
    <property type="entry name" value="Endonuclease_5"/>
    <property type="match status" value="1"/>
</dbReference>
<dbReference type="InterPro" id="IPR007581">
    <property type="entry name" value="Endonuclease-V"/>
</dbReference>
<dbReference type="NCBIfam" id="NF008629">
    <property type="entry name" value="PRK11617.1"/>
    <property type="match status" value="1"/>
</dbReference>
<dbReference type="PANTHER" id="PTHR28511">
    <property type="entry name" value="ENDONUCLEASE V"/>
    <property type="match status" value="1"/>
</dbReference>
<dbReference type="PANTHER" id="PTHR28511:SF1">
    <property type="entry name" value="ENDONUCLEASE V"/>
    <property type="match status" value="1"/>
</dbReference>
<dbReference type="Pfam" id="PF04493">
    <property type="entry name" value="Endonuclease_5"/>
    <property type="match status" value="1"/>
</dbReference>
<evidence type="ECO:0000255" key="1">
    <source>
        <dbReference type="HAMAP-Rule" id="MF_00801"/>
    </source>
</evidence>
<feature type="chain" id="PRO_1000062261" description="Endonuclease V">
    <location>
        <begin position="1"/>
        <end position="223"/>
    </location>
</feature>
<feature type="binding site" evidence="1">
    <location>
        <position position="35"/>
    </location>
    <ligand>
        <name>Mg(2+)</name>
        <dbReference type="ChEBI" id="CHEBI:18420"/>
    </ligand>
</feature>
<feature type="binding site" evidence="1">
    <location>
        <position position="103"/>
    </location>
    <ligand>
        <name>Mg(2+)</name>
        <dbReference type="ChEBI" id="CHEBI:18420"/>
    </ligand>
</feature>
<feature type="site" description="Interaction with target DNA" evidence="1">
    <location>
        <position position="73"/>
    </location>
</feature>
<gene>
    <name evidence="1" type="primary">nfi</name>
    <name type="ordered locus">EcE24377A_4541</name>
</gene>
<organism>
    <name type="scientific">Escherichia coli O139:H28 (strain E24377A / ETEC)</name>
    <dbReference type="NCBI Taxonomy" id="331111"/>
    <lineage>
        <taxon>Bacteria</taxon>
        <taxon>Pseudomonadati</taxon>
        <taxon>Pseudomonadota</taxon>
        <taxon>Gammaproteobacteria</taxon>
        <taxon>Enterobacterales</taxon>
        <taxon>Enterobacteriaceae</taxon>
        <taxon>Escherichia</taxon>
    </lineage>
</organism>
<sequence length="223" mass="24691">MDLASLRAQQIELASSVIREDRLDKDPPDLIAGADVGFEQGGEVTRAAMVLLKYPSLELVEYKVARIATTMPYIPGFLSFREYPALLAAWEMLSQKPDLVFVDGHGISHPRRLGVASHFGLMVDVPTIGVAKKRLCGKFEPLSSEPGALAPLMDKGEQLAWVWRSKARCNPLFIATGHRVSVDSALAWVQRCMKGYRLPEPTRWADAVASERPAFVRYTANQP</sequence>